<organism>
    <name type="scientific">Nostoc sp. (strain PCC 7120 / SAG 25.82 / UTEX 2576)</name>
    <dbReference type="NCBI Taxonomy" id="103690"/>
    <lineage>
        <taxon>Bacteria</taxon>
        <taxon>Bacillati</taxon>
        <taxon>Cyanobacteriota</taxon>
        <taxon>Cyanophyceae</taxon>
        <taxon>Nostocales</taxon>
        <taxon>Nostocaceae</taxon>
        <taxon>Nostoc</taxon>
    </lineage>
</organism>
<comment type="similarity">
    <text evidence="1">Belongs to the bacterial ribosomal protein bL34 family.</text>
</comment>
<gene>
    <name evidence="1" type="primary">rpmH</name>
    <name evidence="1" type="synonym">rpl34</name>
    <name type="ordered locus">asr3412</name>
</gene>
<protein>
    <recommendedName>
        <fullName evidence="1">Large ribosomal subunit protein bL34</fullName>
    </recommendedName>
    <alternativeName>
        <fullName evidence="3">50S ribosomal protein L34</fullName>
    </alternativeName>
</protein>
<keyword id="KW-1185">Reference proteome</keyword>
<keyword id="KW-0687">Ribonucleoprotein</keyword>
<keyword id="KW-0689">Ribosomal protein</keyword>
<dbReference type="EMBL" id="BA000019">
    <property type="protein sequence ID" value="BAB75111.1"/>
    <property type="molecule type" value="Genomic_DNA"/>
</dbReference>
<dbReference type="PIR" id="AE2232">
    <property type="entry name" value="AE2232"/>
</dbReference>
<dbReference type="SMR" id="Q8YRN2"/>
<dbReference type="STRING" id="103690.gene:10495451"/>
<dbReference type="KEGG" id="ana:asr3412"/>
<dbReference type="eggNOG" id="COG0230">
    <property type="taxonomic scope" value="Bacteria"/>
</dbReference>
<dbReference type="OrthoDB" id="9804164at2"/>
<dbReference type="Proteomes" id="UP000002483">
    <property type="component" value="Chromosome"/>
</dbReference>
<dbReference type="GO" id="GO:1990904">
    <property type="term" value="C:ribonucleoprotein complex"/>
    <property type="evidence" value="ECO:0007669"/>
    <property type="project" value="UniProtKB-KW"/>
</dbReference>
<dbReference type="GO" id="GO:0005840">
    <property type="term" value="C:ribosome"/>
    <property type="evidence" value="ECO:0007669"/>
    <property type="project" value="UniProtKB-KW"/>
</dbReference>
<dbReference type="GO" id="GO:0003735">
    <property type="term" value="F:structural constituent of ribosome"/>
    <property type="evidence" value="ECO:0007669"/>
    <property type="project" value="InterPro"/>
</dbReference>
<dbReference type="GO" id="GO:0006412">
    <property type="term" value="P:translation"/>
    <property type="evidence" value="ECO:0007669"/>
    <property type="project" value="UniProtKB-UniRule"/>
</dbReference>
<dbReference type="Gene3D" id="1.10.287.3980">
    <property type="match status" value="1"/>
</dbReference>
<dbReference type="HAMAP" id="MF_00391">
    <property type="entry name" value="Ribosomal_bL34"/>
    <property type="match status" value="1"/>
</dbReference>
<dbReference type="InterPro" id="IPR000271">
    <property type="entry name" value="Ribosomal_bL34"/>
</dbReference>
<dbReference type="InterPro" id="IPR020939">
    <property type="entry name" value="Ribosomal_bL34_CS"/>
</dbReference>
<dbReference type="NCBIfam" id="TIGR01030">
    <property type="entry name" value="rpmH_bact"/>
    <property type="match status" value="1"/>
</dbReference>
<dbReference type="Pfam" id="PF00468">
    <property type="entry name" value="Ribosomal_L34"/>
    <property type="match status" value="1"/>
</dbReference>
<dbReference type="PROSITE" id="PS00784">
    <property type="entry name" value="RIBOSOMAL_L34"/>
    <property type="match status" value="1"/>
</dbReference>
<proteinExistence type="inferred from homology"/>
<sequence>MQRTLGGTNRKRKRTSGFRARMRTPDGRNVIRARRKRGRHRLSV</sequence>
<name>RL34_NOSS1</name>
<evidence type="ECO:0000255" key="1">
    <source>
        <dbReference type="HAMAP-Rule" id="MF_00391"/>
    </source>
</evidence>
<evidence type="ECO:0000256" key="2">
    <source>
        <dbReference type="SAM" id="MobiDB-lite"/>
    </source>
</evidence>
<evidence type="ECO:0000305" key="3"/>
<accession>Q8YRN2</accession>
<feature type="chain" id="PRO_0000187334" description="Large ribosomal subunit protein bL34">
    <location>
        <begin position="1"/>
        <end position="44"/>
    </location>
</feature>
<feature type="region of interest" description="Disordered" evidence="2">
    <location>
        <begin position="1"/>
        <end position="26"/>
    </location>
</feature>
<feature type="compositionally biased region" description="Basic residues" evidence="2">
    <location>
        <begin position="9"/>
        <end position="22"/>
    </location>
</feature>
<reference key="1">
    <citation type="journal article" date="2001" name="DNA Res.">
        <title>Complete genomic sequence of the filamentous nitrogen-fixing cyanobacterium Anabaena sp. strain PCC 7120.</title>
        <authorList>
            <person name="Kaneko T."/>
            <person name="Nakamura Y."/>
            <person name="Wolk C.P."/>
            <person name="Kuritz T."/>
            <person name="Sasamoto S."/>
            <person name="Watanabe A."/>
            <person name="Iriguchi M."/>
            <person name="Ishikawa A."/>
            <person name="Kawashima K."/>
            <person name="Kimura T."/>
            <person name="Kishida Y."/>
            <person name="Kohara M."/>
            <person name="Matsumoto M."/>
            <person name="Matsuno A."/>
            <person name="Muraki A."/>
            <person name="Nakazaki N."/>
            <person name="Shimpo S."/>
            <person name="Sugimoto M."/>
            <person name="Takazawa M."/>
            <person name="Yamada M."/>
            <person name="Yasuda M."/>
            <person name="Tabata S."/>
        </authorList>
    </citation>
    <scope>NUCLEOTIDE SEQUENCE [LARGE SCALE GENOMIC DNA]</scope>
    <source>
        <strain>PCC 7120 / SAG 25.82 / UTEX 2576</strain>
    </source>
</reference>